<evidence type="ECO:0000250" key="1"/>
<evidence type="ECO:0000256" key="2">
    <source>
        <dbReference type="SAM" id="MobiDB-lite"/>
    </source>
</evidence>
<evidence type="ECO:0000305" key="3"/>
<dbReference type="EMBL" id="X58895">
    <property type="protein sequence ID" value="CAA41699.1"/>
    <property type="molecule type" value="Genomic_DNA"/>
</dbReference>
<dbReference type="SMR" id="P62794"/>
<dbReference type="GO" id="GO:0000786">
    <property type="term" value="C:nucleosome"/>
    <property type="evidence" value="ECO:0007669"/>
    <property type="project" value="UniProtKB-KW"/>
</dbReference>
<dbReference type="GO" id="GO:0005634">
    <property type="term" value="C:nucleus"/>
    <property type="evidence" value="ECO:0007669"/>
    <property type="project" value="UniProtKB-SubCell"/>
</dbReference>
<dbReference type="GO" id="GO:0003677">
    <property type="term" value="F:DNA binding"/>
    <property type="evidence" value="ECO:0007669"/>
    <property type="project" value="UniProtKB-KW"/>
</dbReference>
<dbReference type="GO" id="GO:0046982">
    <property type="term" value="F:protein heterodimerization activity"/>
    <property type="evidence" value="ECO:0007669"/>
    <property type="project" value="InterPro"/>
</dbReference>
<dbReference type="GO" id="GO:0030527">
    <property type="term" value="F:structural constituent of chromatin"/>
    <property type="evidence" value="ECO:0007669"/>
    <property type="project" value="InterPro"/>
</dbReference>
<dbReference type="CDD" id="cd22912">
    <property type="entry name" value="HFD_H4"/>
    <property type="match status" value="1"/>
</dbReference>
<dbReference type="FunFam" id="1.10.20.10:FF:000002">
    <property type="entry name" value="Histone H4"/>
    <property type="match status" value="1"/>
</dbReference>
<dbReference type="Gene3D" id="1.10.20.10">
    <property type="entry name" value="Histone, subunit A"/>
    <property type="match status" value="1"/>
</dbReference>
<dbReference type="InterPro" id="IPR035425">
    <property type="entry name" value="CENP-T/H4_C"/>
</dbReference>
<dbReference type="InterPro" id="IPR009072">
    <property type="entry name" value="Histone-fold"/>
</dbReference>
<dbReference type="InterPro" id="IPR001951">
    <property type="entry name" value="Histone_H4"/>
</dbReference>
<dbReference type="InterPro" id="IPR019809">
    <property type="entry name" value="Histone_H4_CS"/>
</dbReference>
<dbReference type="InterPro" id="IPR004823">
    <property type="entry name" value="TAF_TATA-bd_Histone-like_dom"/>
</dbReference>
<dbReference type="PANTHER" id="PTHR10484">
    <property type="entry name" value="HISTONE H4"/>
    <property type="match status" value="1"/>
</dbReference>
<dbReference type="Pfam" id="PF15511">
    <property type="entry name" value="CENP-T_C"/>
    <property type="match status" value="1"/>
</dbReference>
<dbReference type="PRINTS" id="PR00623">
    <property type="entry name" value="HISTONEH4"/>
</dbReference>
<dbReference type="SMART" id="SM00417">
    <property type="entry name" value="H4"/>
    <property type="match status" value="1"/>
</dbReference>
<dbReference type="SMART" id="SM00803">
    <property type="entry name" value="TAF"/>
    <property type="match status" value="1"/>
</dbReference>
<dbReference type="SUPFAM" id="SSF47113">
    <property type="entry name" value="Histone-fold"/>
    <property type="match status" value="1"/>
</dbReference>
<dbReference type="PROSITE" id="PS00047">
    <property type="entry name" value="HISTONE_H4"/>
    <property type="match status" value="1"/>
</dbReference>
<name>H4_URECA</name>
<organism>
    <name type="scientific">Urechis caupo</name>
    <name type="common">Innkeeper worm</name>
    <name type="synonym">Spoonworm</name>
    <dbReference type="NCBI Taxonomy" id="6431"/>
    <lineage>
        <taxon>Eukaryota</taxon>
        <taxon>Metazoa</taxon>
        <taxon>Spiralia</taxon>
        <taxon>Lophotrochozoa</taxon>
        <taxon>Annelida</taxon>
        <taxon>Polychaeta</taxon>
        <taxon>Echiura</taxon>
        <taxon>Xenopneusta</taxon>
        <taxon>Urechidae</taxon>
        <taxon>Urechis</taxon>
    </lineage>
</organism>
<comment type="function">
    <text>Core component of nucleosome. Nucleosomes wrap and compact DNA into chromatin, limiting DNA accessibility to the cellular machineries which require DNA as a template. Histones thereby play a central role in transcription regulation, DNA repair, DNA replication and chromosomal stability. DNA accessibility is regulated via a complex set of post-translational modifications of histones, also called histone code, and nucleosome remodeling.</text>
</comment>
<comment type="subunit">
    <text>The nucleosome is a histone octamer containing two molecules each of H2A, H2B, H3 and H4 assembled in one H3-H4 heterotetramer and two H2A-H2B heterodimers. The octamer wraps approximately 147 bp of DNA.</text>
</comment>
<comment type="subcellular location">
    <subcellularLocation>
        <location evidence="1">Nucleus</location>
    </subcellularLocation>
    <subcellularLocation>
        <location evidence="1">Chromosome</location>
    </subcellularLocation>
</comment>
<comment type="similarity">
    <text evidence="3">Belongs to the histone H4 family.</text>
</comment>
<sequence>MSGRGKGGKGLGKGGAKRHRKVLRDNIQGITKPAIRRLARRGGVKRISGLIYEETRGVLKVFLENVIRDAVTYTEHAKRKTVTAMDVVYALKRQGRTLYGFGG</sequence>
<accession>P62794</accession>
<accession>P02304</accession>
<accession>P02305</accession>
<keyword id="KW-0007">Acetylation</keyword>
<keyword id="KW-0158">Chromosome</keyword>
<keyword id="KW-0238">DNA-binding</keyword>
<keyword id="KW-0488">Methylation</keyword>
<keyword id="KW-0544">Nucleosome core</keyword>
<keyword id="KW-0539">Nucleus</keyword>
<protein>
    <recommendedName>
        <fullName>Histone H4</fullName>
    </recommendedName>
</protein>
<proteinExistence type="inferred from homology"/>
<feature type="initiator methionine" description="Removed" evidence="1">
    <location>
        <position position="1"/>
    </location>
</feature>
<feature type="chain" id="PRO_0000158370" description="Histone H4">
    <location>
        <begin position="2"/>
        <end position="103"/>
    </location>
</feature>
<feature type="DNA-binding region">
    <location>
        <begin position="17"/>
        <end position="21"/>
    </location>
</feature>
<feature type="region of interest" description="Disordered" evidence="2">
    <location>
        <begin position="1"/>
        <end position="20"/>
    </location>
</feature>
<feature type="compositionally biased region" description="Gly residues" evidence="2">
    <location>
        <begin position="1"/>
        <end position="14"/>
    </location>
</feature>
<feature type="modified residue" description="N-acetylserine" evidence="1">
    <location>
        <position position="2"/>
    </location>
</feature>
<feature type="modified residue" description="N6-acetyllysine" evidence="1">
    <location>
        <position position="6"/>
    </location>
</feature>
<feature type="modified residue" description="N6-acetyllysine" evidence="1">
    <location>
        <position position="13"/>
    </location>
</feature>
<feature type="modified residue" description="N6-acetyllysine" evidence="1">
    <location>
        <position position="17"/>
    </location>
</feature>
<feature type="modified residue" description="N6-methylated lysine" evidence="1">
    <location>
        <position position="21"/>
    </location>
</feature>
<reference key="1">
    <citation type="journal article" date="1992" name="DNA Seq.">
        <title>Nucleotide sequence of the Urechis caupo core histone gene tandem repeat.</title>
        <authorList>
            <person name="Davis F.C."/>
            <person name="Shelton J.C."/>
            <person name="Ingham L.D."/>
        </authorList>
    </citation>
    <scope>NUCLEOTIDE SEQUENCE [GENOMIC DNA]</scope>
    <source>
        <tissue>Sperm</tissue>
    </source>
</reference>